<protein>
    <recommendedName>
        <fullName evidence="1">Chaperone protein DnaJ</fullName>
    </recommendedName>
</protein>
<keyword id="KW-0143">Chaperone</keyword>
<keyword id="KW-0963">Cytoplasm</keyword>
<keyword id="KW-0235">DNA replication</keyword>
<keyword id="KW-0479">Metal-binding</keyword>
<keyword id="KW-0677">Repeat</keyword>
<keyword id="KW-0346">Stress response</keyword>
<keyword id="KW-0862">Zinc</keyword>
<keyword id="KW-0863">Zinc-finger</keyword>
<dbReference type="EMBL" id="CP000050">
    <property type="protein sequence ID" value="AAY49811.1"/>
    <property type="molecule type" value="Genomic_DNA"/>
</dbReference>
<dbReference type="RefSeq" id="WP_011036661.1">
    <property type="nucleotide sequence ID" value="NZ_CP155948.1"/>
</dbReference>
<dbReference type="SMR" id="Q4UT12"/>
<dbReference type="KEGG" id="xcb:XC_2762"/>
<dbReference type="HOGENOM" id="CLU_017633_0_7_6"/>
<dbReference type="Proteomes" id="UP000000420">
    <property type="component" value="Chromosome"/>
</dbReference>
<dbReference type="GO" id="GO:0005737">
    <property type="term" value="C:cytoplasm"/>
    <property type="evidence" value="ECO:0007669"/>
    <property type="project" value="UniProtKB-SubCell"/>
</dbReference>
<dbReference type="GO" id="GO:0005524">
    <property type="term" value="F:ATP binding"/>
    <property type="evidence" value="ECO:0007669"/>
    <property type="project" value="InterPro"/>
</dbReference>
<dbReference type="GO" id="GO:0031072">
    <property type="term" value="F:heat shock protein binding"/>
    <property type="evidence" value="ECO:0007669"/>
    <property type="project" value="InterPro"/>
</dbReference>
<dbReference type="GO" id="GO:0051082">
    <property type="term" value="F:unfolded protein binding"/>
    <property type="evidence" value="ECO:0007669"/>
    <property type="project" value="UniProtKB-UniRule"/>
</dbReference>
<dbReference type="GO" id="GO:0008270">
    <property type="term" value="F:zinc ion binding"/>
    <property type="evidence" value="ECO:0007669"/>
    <property type="project" value="UniProtKB-UniRule"/>
</dbReference>
<dbReference type="GO" id="GO:0051085">
    <property type="term" value="P:chaperone cofactor-dependent protein refolding"/>
    <property type="evidence" value="ECO:0007669"/>
    <property type="project" value="TreeGrafter"/>
</dbReference>
<dbReference type="GO" id="GO:0006260">
    <property type="term" value="P:DNA replication"/>
    <property type="evidence" value="ECO:0007669"/>
    <property type="project" value="UniProtKB-KW"/>
</dbReference>
<dbReference type="GO" id="GO:0042026">
    <property type="term" value="P:protein refolding"/>
    <property type="evidence" value="ECO:0007669"/>
    <property type="project" value="TreeGrafter"/>
</dbReference>
<dbReference type="GO" id="GO:0009408">
    <property type="term" value="P:response to heat"/>
    <property type="evidence" value="ECO:0007669"/>
    <property type="project" value="InterPro"/>
</dbReference>
<dbReference type="CDD" id="cd06257">
    <property type="entry name" value="DnaJ"/>
    <property type="match status" value="1"/>
</dbReference>
<dbReference type="CDD" id="cd10747">
    <property type="entry name" value="DnaJ_C"/>
    <property type="match status" value="1"/>
</dbReference>
<dbReference type="CDD" id="cd10719">
    <property type="entry name" value="DnaJ_zf"/>
    <property type="match status" value="1"/>
</dbReference>
<dbReference type="FunFam" id="1.10.287.110:FF:000099">
    <property type="entry name" value="Chaperone protein DnaJ"/>
    <property type="match status" value="1"/>
</dbReference>
<dbReference type="FunFam" id="2.10.230.10:FF:000002">
    <property type="entry name" value="Molecular chaperone DnaJ"/>
    <property type="match status" value="1"/>
</dbReference>
<dbReference type="FunFam" id="2.60.260.20:FF:000004">
    <property type="entry name" value="Molecular chaperone DnaJ"/>
    <property type="match status" value="1"/>
</dbReference>
<dbReference type="Gene3D" id="1.10.287.110">
    <property type="entry name" value="DnaJ domain"/>
    <property type="match status" value="1"/>
</dbReference>
<dbReference type="Gene3D" id="2.10.230.10">
    <property type="entry name" value="Heat shock protein DnaJ, cysteine-rich domain"/>
    <property type="match status" value="1"/>
</dbReference>
<dbReference type="Gene3D" id="2.60.260.20">
    <property type="entry name" value="Urease metallochaperone UreE, N-terminal domain"/>
    <property type="match status" value="2"/>
</dbReference>
<dbReference type="HAMAP" id="MF_01152">
    <property type="entry name" value="DnaJ"/>
    <property type="match status" value="1"/>
</dbReference>
<dbReference type="InterPro" id="IPR012724">
    <property type="entry name" value="DnaJ"/>
</dbReference>
<dbReference type="InterPro" id="IPR002939">
    <property type="entry name" value="DnaJ_C"/>
</dbReference>
<dbReference type="InterPro" id="IPR001623">
    <property type="entry name" value="DnaJ_domain"/>
</dbReference>
<dbReference type="InterPro" id="IPR008971">
    <property type="entry name" value="HSP40/DnaJ_pept-bd"/>
</dbReference>
<dbReference type="InterPro" id="IPR001305">
    <property type="entry name" value="HSP_DnaJ_Cys-rich_dom"/>
</dbReference>
<dbReference type="InterPro" id="IPR036410">
    <property type="entry name" value="HSP_DnaJ_Cys-rich_dom_sf"/>
</dbReference>
<dbReference type="InterPro" id="IPR036869">
    <property type="entry name" value="J_dom_sf"/>
</dbReference>
<dbReference type="NCBIfam" id="TIGR02349">
    <property type="entry name" value="DnaJ_bact"/>
    <property type="match status" value="1"/>
</dbReference>
<dbReference type="NCBIfam" id="NF008035">
    <property type="entry name" value="PRK10767.1"/>
    <property type="match status" value="1"/>
</dbReference>
<dbReference type="PANTHER" id="PTHR43096:SF48">
    <property type="entry name" value="CHAPERONE PROTEIN DNAJ"/>
    <property type="match status" value="1"/>
</dbReference>
<dbReference type="PANTHER" id="PTHR43096">
    <property type="entry name" value="DNAJ HOMOLOG 1, MITOCHONDRIAL-RELATED"/>
    <property type="match status" value="1"/>
</dbReference>
<dbReference type="Pfam" id="PF00226">
    <property type="entry name" value="DnaJ"/>
    <property type="match status" value="1"/>
</dbReference>
<dbReference type="Pfam" id="PF01556">
    <property type="entry name" value="DnaJ_C"/>
    <property type="match status" value="1"/>
</dbReference>
<dbReference type="Pfam" id="PF00684">
    <property type="entry name" value="DnaJ_CXXCXGXG"/>
    <property type="match status" value="1"/>
</dbReference>
<dbReference type="PRINTS" id="PR00625">
    <property type="entry name" value="JDOMAIN"/>
</dbReference>
<dbReference type="SMART" id="SM00271">
    <property type="entry name" value="DnaJ"/>
    <property type="match status" value="1"/>
</dbReference>
<dbReference type="SUPFAM" id="SSF46565">
    <property type="entry name" value="Chaperone J-domain"/>
    <property type="match status" value="1"/>
</dbReference>
<dbReference type="SUPFAM" id="SSF57938">
    <property type="entry name" value="DnaJ/Hsp40 cysteine-rich domain"/>
    <property type="match status" value="1"/>
</dbReference>
<dbReference type="SUPFAM" id="SSF49493">
    <property type="entry name" value="HSP40/DnaJ peptide-binding domain"/>
    <property type="match status" value="2"/>
</dbReference>
<dbReference type="PROSITE" id="PS50076">
    <property type="entry name" value="DNAJ_2"/>
    <property type="match status" value="1"/>
</dbReference>
<dbReference type="PROSITE" id="PS51188">
    <property type="entry name" value="ZF_CR"/>
    <property type="match status" value="1"/>
</dbReference>
<proteinExistence type="inferred from homology"/>
<gene>
    <name evidence="1" type="primary">dnaJ</name>
    <name type="ordered locus">XC_2762</name>
</gene>
<comment type="function">
    <text evidence="1">Participates actively in the response to hyperosmotic and heat shock by preventing the aggregation of stress-denatured proteins and by disaggregating proteins, also in an autonomous, DnaK-independent fashion. Unfolded proteins bind initially to DnaJ; upon interaction with the DnaJ-bound protein, DnaK hydrolyzes its bound ATP, resulting in the formation of a stable complex. GrpE releases ADP from DnaK; ATP binding to DnaK triggers the release of the substrate protein, thus completing the reaction cycle. Several rounds of ATP-dependent interactions between DnaJ, DnaK and GrpE are required for fully efficient folding. Also involved, together with DnaK and GrpE, in the DNA replication of plasmids through activation of initiation proteins.</text>
</comment>
<comment type="cofactor">
    <cofactor evidence="1">
        <name>Zn(2+)</name>
        <dbReference type="ChEBI" id="CHEBI:29105"/>
    </cofactor>
    <text evidence="1">Binds 2 Zn(2+) ions per monomer.</text>
</comment>
<comment type="subunit">
    <text evidence="1">Homodimer.</text>
</comment>
<comment type="subcellular location">
    <subcellularLocation>
        <location evidence="1">Cytoplasm</location>
    </subcellularLocation>
</comment>
<comment type="domain">
    <text evidence="1">The J domain is necessary and sufficient to stimulate DnaK ATPase activity. Zinc center 1 plays an important role in the autonomous, DnaK-independent chaperone activity of DnaJ. Zinc center 2 is essential for interaction with DnaK and for DnaJ activity.</text>
</comment>
<comment type="similarity">
    <text evidence="1">Belongs to the DnaJ family.</text>
</comment>
<feature type="chain" id="PRO_1000085330" description="Chaperone protein DnaJ">
    <location>
        <begin position="1"/>
        <end position="376"/>
    </location>
</feature>
<feature type="domain" description="J" evidence="1">
    <location>
        <begin position="5"/>
        <end position="70"/>
    </location>
</feature>
<feature type="repeat" description="CXXCXGXG motif">
    <location>
        <begin position="145"/>
        <end position="152"/>
    </location>
</feature>
<feature type="repeat" description="CXXCXGXG motif">
    <location>
        <begin position="161"/>
        <end position="168"/>
    </location>
</feature>
<feature type="repeat" description="CXXCXGXG motif">
    <location>
        <begin position="183"/>
        <end position="190"/>
    </location>
</feature>
<feature type="repeat" description="CXXCXGXG motif">
    <location>
        <begin position="197"/>
        <end position="204"/>
    </location>
</feature>
<feature type="zinc finger region" description="CR-type" evidence="1">
    <location>
        <begin position="132"/>
        <end position="209"/>
    </location>
</feature>
<feature type="binding site" evidence="1">
    <location>
        <position position="145"/>
    </location>
    <ligand>
        <name>Zn(2+)</name>
        <dbReference type="ChEBI" id="CHEBI:29105"/>
        <label>1</label>
    </ligand>
</feature>
<feature type="binding site" evidence="1">
    <location>
        <position position="148"/>
    </location>
    <ligand>
        <name>Zn(2+)</name>
        <dbReference type="ChEBI" id="CHEBI:29105"/>
        <label>1</label>
    </ligand>
</feature>
<feature type="binding site" evidence="1">
    <location>
        <position position="161"/>
    </location>
    <ligand>
        <name>Zn(2+)</name>
        <dbReference type="ChEBI" id="CHEBI:29105"/>
        <label>2</label>
    </ligand>
</feature>
<feature type="binding site" evidence="1">
    <location>
        <position position="164"/>
    </location>
    <ligand>
        <name>Zn(2+)</name>
        <dbReference type="ChEBI" id="CHEBI:29105"/>
        <label>2</label>
    </ligand>
</feature>
<feature type="binding site" evidence="1">
    <location>
        <position position="183"/>
    </location>
    <ligand>
        <name>Zn(2+)</name>
        <dbReference type="ChEBI" id="CHEBI:29105"/>
        <label>2</label>
    </ligand>
</feature>
<feature type="binding site" evidence="1">
    <location>
        <position position="186"/>
    </location>
    <ligand>
        <name>Zn(2+)</name>
        <dbReference type="ChEBI" id="CHEBI:29105"/>
        <label>2</label>
    </ligand>
</feature>
<feature type="binding site" evidence="1">
    <location>
        <position position="197"/>
    </location>
    <ligand>
        <name>Zn(2+)</name>
        <dbReference type="ChEBI" id="CHEBI:29105"/>
        <label>1</label>
    </ligand>
</feature>
<feature type="binding site" evidence="1">
    <location>
        <position position="200"/>
    </location>
    <ligand>
        <name>Zn(2+)</name>
        <dbReference type="ChEBI" id="CHEBI:29105"/>
        <label>1</label>
    </ligand>
</feature>
<evidence type="ECO:0000255" key="1">
    <source>
        <dbReference type="HAMAP-Rule" id="MF_01152"/>
    </source>
</evidence>
<sequence>MSKRDYYEVLGVARGASDEELKKAYRRCAMKYHPDRNPGDAAAEATFKECKEAYEVLSDGNKRRAYDAHGHAAFEHGMGGGGGGPGGPDMGDIFGDIFGNIFGGGAAGPRAARRGADVGYVLELDLEEAVAGIERRIEIPTLIECEPCHGSGSEDGKVEVCATCHGRGQVRIQRGIFAMQQSCPHCDGRGTLIQNPCKTCHGAGRVEEDKVLSIKVPAGVDTGDRIRLAGEGEAGPAGTPPGDLYVEVRVREHAIFQRDGDDLHCEVPIRISQAALGDTVRVATLGGEAEIRIPAETQTGKLFRLRGKGVRSVRSRSEGDLYCRVVVETPVNLTTDQRELLKQFEATFTGEDARKHSPKSATFIDGVKGFWDRMTS</sequence>
<name>DNAJ_XANC8</name>
<accession>Q4UT12</accession>
<organism>
    <name type="scientific">Xanthomonas campestris pv. campestris (strain 8004)</name>
    <dbReference type="NCBI Taxonomy" id="314565"/>
    <lineage>
        <taxon>Bacteria</taxon>
        <taxon>Pseudomonadati</taxon>
        <taxon>Pseudomonadota</taxon>
        <taxon>Gammaproteobacteria</taxon>
        <taxon>Lysobacterales</taxon>
        <taxon>Lysobacteraceae</taxon>
        <taxon>Xanthomonas</taxon>
    </lineage>
</organism>
<reference key="1">
    <citation type="journal article" date="2005" name="Genome Res.">
        <title>Comparative and functional genomic analyses of the pathogenicity of phytopathogen Xanthomonas campestris pv. campestris.</title>
        <authorList>
            <person name="Qian W."/>
            <person name="Jia Y."/>
            <person name="Ren S.-X."/>
            <person name="He Y.-Q."/>
            <person name="Feng J.-X."/>
            <person name="Lu L.-F."/>
            <person name="Sun Q."/>
            <person name="Ying G."/>
            <person name="Tang D.-J."/>
            <person name="Tang H."/>
            <person name="Wu W."/>
            <person name="Hao P."/>
            <person name="Wang L."/>
            <person name="Jiang B.-L."/>
            <person name="Zeng S."/>
            <person name="Gu W.-Y."/>
            <person name="Lu G."/>
            <person name="Rong L."/>
            <person name="Tian Y."/>
            <person name="Yao Z."/>
            <person name="Fu G."/>
            <person name="Chen B."/>
            <person name="Fang R."/>
            <person name="Qiang B."/>
            <person name="Chen Z."/>
            <person name="Zhao G.-P."/>
            <person name="Tang J.-L."/>
            <person name="He C."/>
        </authorList>
    </citation>
    <scope>NUCLEOTIDE SEQUENCE [LARGE SCALE GENOMIC DNA]</scope>
    <source>
        <strain>8004</strain>
    </source>
</reference>